<protein>
    <recommendedName>
        <fullName>Putative uncharacterized protein YPL035C</fullName>
    </recommendedName>
</protein>
<comment type="miscellaneous">
    <text evidence="1">Partially overlaps YPL034W.</text>
</comment>
<comment type="caution">
    <text evidence="2">Product of a dubious gene prediction unlikely to encode a functional protein. Because of that it is not part of the S.cerevisiae S288c complete/reference proteome set.</text>
</comment>
<gene>
    <name type="ordered locus">YPL035C</name>
</gene>
<sequence>MKSFSIFFCKLDNEMGNSLFELIFLLSLFNFKWYNLSTFSGVKFITGCLHVVCHSKSLESTVFRVVIPILHRIKSLSTHCLFFLPLVRTIDSSINSHFKSTVFSDMYDSKRLLYV</sequence>
<accession>O13521</accession>
<reference key="1">
    <citation type="journal article" date="1997" name="Nature">
        <title>The nucleotide sequence of Saccharomyces cerevisiae chromosome XVI.</title>
        <authorList>
            <person name="Bussey H."/>
            <person name="Storms R.K."/>
            <person name="Ahmed A."/>
            <person name="Albermann K."/>
            <person name="Allen E."/>
            <person name="Ansorge W."/>
            <person name="Araujo R."/>
            <person name="Aparicio A."/>
            <person name="Barrell B.G."/>
            <person name="Badcock K."/>
            <person name="Benes V."/>
            <person name="Botstein D."/>
            <person name="Bowman S."/>
            <person name="Brueckner M."/>
            <person name="Carpenter J."/>
            <person name="Cherry J.M."/>
            <person name="Chung E."/>
            <person name="Churcher C.M."/>
            <person name="Coster F."/>
            <person name="Davis K."/>
            <person name="Davis R.W."/>
            <person name="Dietrich F.S."/>
            <person name="Delius H."/>
            <person name="DiPaolo T."/>
            <person name="Dubois E."/>
            <person name="Duesterhoeft A."/>
            <person name="Duncan M."/>
            <person name="Floeth M."/>
            <person name="Fortin N."/>
            <person name="Friesen J.D."/>
            <person name="Fritz C."/>
            <person name="Goffeau A."/>
            <person name="Hall J."/>
            <person name="Hebling U."/>
            <person name="Heumann K."/>
            <person name="Hilbert H."/>
            <person name="Hillier L.W."/>
            <person name="Hunicke-Smith S."/>
            <person name="Hyman R.W."/>
            <person name="Johnston M."/>
            <person name="Kalman S."/>
            <person name="Kleine K."/>
            <person name="Komp C."/>
            <person name="Kurdi O."/>
            <person name="Lashkari D."/>
            <person name="Lew H."/>
            <person name="Lin A."/>
            <person name="Lin D."/>
            <person name="Louis E.J."/>
            <person name="Marathe R."/>
            <person name="Messenguy F."/>
            <person name="Mewes H.-W."/>
            <person name="Mirtipati S."/>
            <person name="Moestl D."/>
            <person name="Mueller-Auer S."/>
            <person name="Namath A."/>
            <person name="Nentwich U."/>
            <person name="Oefner P."/>
            <person name="Pearson D."/>
            <person name="Petel F.X."/>
            <person name="Pohl T.M."/>
            <person name="Purnelle B."/>
            <person name="Rajandream M.A."/>
            <person name="Rechmann S."/>
            <person name="Rieger M."/>
            <person name="Riles L."/>
            <person name="Roberts D."/>
            <person name="Schaefer M."/>
            <person name="Scharfe M."/>
            <person name="Scherens B."/>
            <person name="Schramm S."/>
            <person name="Schroeder M."/>
            <person name="Sdicu A.-M."/>
            <person name="Tettelin H."/>
            <person name="Urrestarazu L.A."/>
            <person name="Ushinsky S."/>
            <person name="Vierendeels F."/>
            <person name="Vissers S."/>
            <person name="Voss H."/>
            <person name="Walsh S.V."/>
            <person name="Wambutt R."/>
            <person name="Wang Y."/>
            <person name="Wedler E."/>
            <person name="Wedler H."/>
            <person name="Winnett E."/>
            <person name="Zhong W.-W."/>
            <person name="Zollner A."/>
            <person name="Vo D.H."/>
            <person name="Hani J."/>
        </authorList>
    </citation>
    <scope>NUCLEOTIDE SEQUENCE [LARGE SCALE GENOMIC DNA]</scope>
    <source>
        <strain>ATCC 204508 / S288c</strain>
    </source>
</reference>
<reference key="2">
    <citation type="journal article" date="2014" name="G3 (Bethesda)">
        <title>The reference genome sequence of Saccharomyces cerevisiae: Then and now.</title>
        <authorList>
            <person name="Engel S.R."/>
            <person name="Dietrich F.S."/>
            <person name="Fisk D.G."/>
            <person name="Binkley G."/>
            <person name="Balakrishnan R."/>
            <person name="Costanzo M.C."/>
            <person name="Dwight S.S."/>
            <person name="Hitz B.C."/>
            <person name="Karra K."/>
            <person name="Nash R.S."/>
            <person name="Weng S."/>
            <person name="Wong E.D."/>
            <person name="Lloyd P."/>
            <person name="Skrzypek M.S."/>
            <person name="Miyasato S.R."/>
            <person name="Simison M."/>
            <person name="Cherry J.M."/>
        </authorList>
    </citation>
    <scope>GENOME REANNOTATION</scope>
    <source>
        <strain>ATCC 204508 / S288c</strain>
    </source>
</reference>
<proteinExistence type="uncertain"/>
<dbReference type="EMBL" id="U44030">
    <property type="protein sequence ID" value="AAB68191.1"/>
    <property type="molecule type" value="Genomic_DNA"/>
</dbReference>
<dbReference type="PIR" id="S69470">
    <property type="entry name" value="S69470"/>
</dbReference>
<dbReference type="MINT" id="O13521"/>
<dbReference type="PaxDb" id="4932-YPL035C"/>
<dbReference type="EnsemblFungi" id="YPL035C_mRNA">
    <property type="protein sequence ID" value="YPL035C"/>
    <property type="gene ID" value="YPL035C"/>
</dbReference>
<dbReference type="AGR" id="SGD:S000005956"/>
<dbReference type="SGD" id="S000005956">
    <property type="gene designation" value="YPL035C"/>
</dbReference>
<dbReference type="HOGENOM" id="CLU_2110845_0_0_1"/>
<feature type="chain" id="PRO_0000299798" description="Putative uncharacterized protein YPL035C">
    <location>
        <begin position="1"/>
        <end position="115"/>
    </location>
</feature>
<organism>
    <name type="scientific">Saccharomyces cerevisiae (strain ATCC 204508 / S288c)</name>
    <name type="common">Baker's yeast</name>
    <dbReference type="NCBI Taxonomy" id="559292"/>
    <lineage>
        <taxon>Eukaryota</taxon>
        <taxon>Fungi</taxon>
        <taxon>Dikarya</taxon>
        <taxon>Ascomycota</taxon>
        <taxon>Saccharomycotina</taxon>
        <taxon>Saccharomycetes</taxon>
        <taxon>Saccharomycetales</taxon>
        <taxon>Saccharomycetaceae</taxon>
        <taxon>Saccharomyces</taxon>
    </lineage>
</organism>
<name>YP035_YEAST</name>
<evidence type="ECO:0000305" key="1"/>
<evidence type="ECO:0000305" key="2">
    <source>
    </source>
</evidence>